<sequence length="137" mass="15692">MSAHLQWMVVRNCSSFLIKRNKQTYSTEPNNLKARNSFRYNGLIHRKTVGVEPAADGKGVVVVMKRRSGQRKPATSYVRTTINKNARATLSSIRHMIRKNKYRPDLRMAAIRRASAILRSQKPVMVKRKPSRPTKSS</sequence>
<reference key="1">
    <citation type="submission" date="2005-08" db="EMBL/GenBank/DDBJ databases">
        <authorList>
            <consortium name="NIH - Mammalian Gene Collection (MGC) project"/>
        </authorList>
    </citation>
    <scope>NUCLEOTIDE SEQUENCE [LARGE SCALE MRNA]</scope>
    <source>
        <strain>Crossbred X Angus</strain>
        <tissue>Ileum</tissue>
    </source>
</reference>
<protein>
    <recommendedName>
        <fullName evidence="2">Large ribosomal subunit protein eL28</fullName>
    </recommendedName>
    <alternativeName>
        <fullName>60S ribosomal protein L28</fullName>
    </alternativeName>
</protein>
<evidence type="ECO:0000250" key="1">
    <source>
        <dbReference type="UniProtKB" id="P46779"/>
    </source>
</evidence>
<evidence type="ECO:0000305" key="2"/>
<proteinExistence type="evidence at transcript level"/>
<accession>Q3T0L7</accession>
<gene>
    <name type="primary">RPL28</name>
</gene>
<keyword id="KW-0007">Acetylation</keyword>
<keyword id="KW-0963">Cytoplasm</keyword>
<keyword id="KW-1017">Isopeptide bond</keyword>
<keyword id="KW-0597">Phosphoprotein</keyword>
<keyword id="KW-1185">Reference proteome</keyword>
<keyword id="KW-0687">Ribonucleoprotein</keyword>
<keyword id="KW-0689">Ribosomal protein</keyword>
<keyword id="KW-0832">Ubl conjugation</keyword>
<comment type="function">
    <text evidence="1">Component of the large ribosomal subunit. The ribosome is a large ribonucleoprotein complex responsible for the synthesis of proteins in the cell.</text>
</comment>
<comment type="subunit">
    <text evidence="1">Component of the large ribosomal subunit.</text>
</comment>
<comment type="subcellular location">
    <subcellularLocation>
        <location evidence="1">Cytoplasm</location>
    </subcellularLocation>
</comment>
<comment type="similarity">
    <text evidence="2">Belongs to the eukaryotic ribosomal protein eL28 family.</text>
</comment>
<feature type="initiator methionine" description="Removed" evidence="1">
    <location>
        <position position="1"/>
    </location>
</feature>
<feature type="chain" id="PRO_0000240147" description="Large ribosomal subunit protein eL28">
    <location>
        <begin position="2"/>
        <end position="137"/>
    </location>
</feature>
<feature type="modified residue" description="N-acetylserine" evidence="1">
    <location>
        <position position="2"/>
    </location>
</feature>
<feature type="modified residue" description="Phosphoserine" evidence="1">
    <location>
        <position position="115"/>
    </location>
</feature>
<feature type="cross-link" description="Glycyl lysine isopeptide (Lys-Gly) (interchain with G-Cter in SUMO2)" evidence="1">
    <location>
        <position position="58"/>
    </location>
</feature>
<feature type="cross-link" description="Glycyl lysine isopeptide (Lys-Gly) (interchain with G-Cter in SUMO2)" evidence="1">
    <location>
        <position position="65"/>
    </location>
</feature>
<dbReference type="EMBL" id="BC102344">
    <property type="protein sequence ID" value="AAI02345.1"/>
    <property type="molecule type" value="mRNA"/>
</dbReference>
<dbReference type="RefSeq" id="NP_001030580.1">
    <property type="nucleotide sequence ID" value="NM_001035503.2"/>
</dbReference>
<dbReference type="RefSeq" id="XP_005219774.1">
    <property type="nucleotide sequence ID" value="XM_005219717.4"/>
</dbReference>
<dbReference type="SMR" id="Q3T0L7"/>
<dbReference type="FunCoup" id="Q3T0L7">
    <property type="interactions" value="1978"/>
</dbReference>
<dbReference type="STRING" id="9913.ENSBTAP00000031700"/>
<dbReference type="PaxDb" id="9913-ENSBTAP00000031700"/>
<dbReference type="PeptideAtlas" id="Q3T0L7"/>
<dbReference type="GeneID" id="618702"/>
<dbReference type="KEGG" id="bta:618702"/>
<dbReference type="CTD" id="6158"/>
<dbReference type="eggNOG" id="KOG3412">
    <property type="taxonomic scope" value="Eukaryota"/>
</dbReference>
<dbReference type="HOGENOM" id="CLU_106801_1_0_1"/>
<dbReference type="InParanoid" id="Q3T0L7"/>
<dbReference type="OrthoDB" id="338850at2759"/>
<dbReference type="TreeFam" id="TF300173"/>
<dbReference type="Proteomes" id="UP000009136">
    <property type="component" value="Unplaced"/>
</dbReference>
<dbReference type="GO" id="GO:0022625">
    <property type="term" value="C:cytosolic large ribosomal subunit"/>
    <property type="evidence" value="ECO:0000318"/>
    <property type="project" value="GO_Central"/>
</dbReference>
<dbReference type="GO" id="GO:0003735">
    <property type="term" value="F:structural constituent of ribosome"/>
    <property type="evidence" value="ECO:0007669"/>
    <property type="project" value="InterPro"/>
</dbReference>
<dbReference type="GO" id="GO:0006412">
    <property type="term" value="P:translation"/>
    <property type="evidence" value="ECO:0007669"/>
    <property type="project" value="InterPro"/>
</dbReference>
<dbReference type="FunFam" id="3.30.390.110:FF:000002">
    <property type="entry name" value="60S ribosomal protein L28"/>
    <property type="match status" value="1"/>
</dbReference>
<dbReference type="Gene3D" id="3.30.390.110">
    <property type="match status" value="1"/>
</dbReference>
<dbReference type="InterPro" id="IPR002672">
    <property type="entry name" value="Ribosomal_eL28"/>
</dbReference>
<dbReference type="InterPro" id="IPR029004">
    <property type="entry name" value="Ribosomal_eL28/Mak16"/>
</dbReference>
<dbReference type="PANTHER" id="PTHR10544">
    <property type="entry name" value="60S RIBOSOMAL PROTEIN L28"/>
    <property type="match status" value="1"/>
</dbReference>
<dbReference type="Pfam" id="PF01778">
    <property type="entry name" value="Ribosomal_L28e"/>
    <property type="match status" value="1"/>
</dbReference>
<organism>
    <name type="scientific">Bos taurus</name>
    <name type="common">Bovine</name>
    <dbReference type="NCBI Taxonomy" id="9913"/>
    <lineage>
        <taxon>Eukaryota</taxon>
        <taxon>Metazoa</taxon>
        <taxon>Chordata</taxon>
        <taxon>Craniata</taxon>
        <taxon>Vertebrata</taxon>
        <taxon>Euteleostomi</taxon>
        <taxon>Mammalia</taxon>
        <taxon>Eutheria</taxon>
        <taxon>Laurasiatheria</taxon>
        <taxon>Artiodactyla</taxon>
        <taxon>Ruminantia</taxon>
        <taxon>Pecora</taxon>
        <taxon>Bovidae</taxon>
        <taxon>Bovinae</taxon>
        <taxon>Bos</taxon>
    </lineage>
</organism>
<name>RL28_BOVIN</name>